<evidence type="ECO:0000255" key="1">
    <source>
        <dbReference type="HAMAP-Rule" id="MF_01274"/>
    </source>
</evidence>
<reference key="1">
    <citation type="journal article" date="2007" name="PLoS ONE">
        <title>Analysis of the neurotoxin complex genes in Clostridium botulinum A1-A4 and B1 strains: BoNT/A3, /Ba4 and /B1 clusters are located within plasmids.</title>
        <authorList>
            <person name="Smith T.J."/>
            <person name="Hill K.K."/>
            <person name="Foley B.T."/>
            <person name="Detter J.C."/>
            <person name="Munk A.C."/>
            <person name="Bruce D.C."/>
            <person name="Doggett N.A."/>
            <person name="Smith L.A."/>
            <person name="Marks J.D."/>
            <person name="Xie G."/>
            <person name="Brettin T.S."/>
        </authorList>
    </citation>
    <scope>NUCLEOTIDE SEQUENCE [LARGE SCALE GENOMIC DNA]</scope>
    <source>
        <strain>Okra / Type B1</strain>
    </source>
</reference>
<organism>
    <name type="scientific">Clostridium botulinum (strain Okra / Type B1)</name>
    <dbReference type="NCBI Taxonomy" id="498213"/>
    <lineage>
        <taxon>Bacteria</taxon>
        <taxon>Bacillati</taxon>
        <taxon>Bacillota</taxon>
        <taxon>Clostridia</taxon>
        <taxon>Eubacteriales</taxon>
        <taxon>Clostridiaceae</taxon>
        <taxon>Clostridium</taxon>
    </lineage>
</organism>
<comment type="function">
    <text evidence="1">Catalyzes the phosphorylation of pantothenate (Pan), the first step in CoA biosynthesis.</text>
</comment>
<comment type="catalytic activity">
    <reaction evidence="1">
        <text>(R)-pantothenate + ATP = (R)-4'-phosphopantothenate + ADP + H(+)</text>
        <dbReference type="Rhea" id="RHEA:16373"/>
        <dbReference type="ChEBI" id="CHEBI:10986"/>
        <dbReference type="ChEBI" id="CHEBI:15378"/>
        <dbReference type="ChEBI" id="CHEBI:29032"/>
        <dbReference type="ChEBI" id="CHEBI:30616"/>
        <dbReference type="ChEBI" id="CHEBI:456216"/>
        <dbReference type="EC" id="2.7.1.33"/>
    </reaction>
</comment>
<comment type="cofactor">
    <cofactor evidence="1">
        <name>NH4(+)</name>
        <dbReference type="ChEBI" id="CHEBI:28938"/>
    </cofactor>
    <cofactor evidence="1">
        <name>K(+)</name>
        <dbReference type="ChEBI" id="CHEBI:29103"/>
    </cofactor>
    <text evidence="1">A monovalent cation. Ammonium or potassium.</text>
</comment>
<comment type="pathway">
    <text evidence="1">Cofactor biosynthesis; coenzyme A biosynthesis; CoA from (R)-pantothenate: step 1/5.</text>
</comment>
<comment type="subunit">
    <text evidence="1">Homodimer.</text>
</comment>
<comment type="subcellular location">
    <subcellularLocation>
        <location evidence="1">Cytoplasm</location>
    </subcellularLocation>
</comment>
<comment type="similarity">
    <text evidence="1">Belongs to the type III pantothenate kinase family.</text>
</comment>
<dbReference type="EC" id="2.7.1.33" evidence="1"/>
<dbReference type="EMBL" id="CP000939">
    <property type="protein sequence ID" value="ACA44886.1"/>
    <property type="molecule type" value="Genomic_DNA"/>
</dbReference>
<dbReference type="RefSeq" id="WP_003359441.1">
    <property type="nucleotide sequence ID" value="NC_010516.1"/>
</dbReference>
<dbReference type="SMR" id="B1IGY0"/>
<dbReference type="KEGG" id="cbb:CLD_0968"/>
<dbReference type="HOGENOM" id="CLU_066627_1_0_9"/>
<dbReference type="UniPathway" id="UPA00241">
    <property type="reaction ID" value="UER00352"/>
</dbReference>
<dbReference type="Proteomes" id="UP000008541">
    <property type="component" value="Chromosome"/>
</dbReference>
<dbReference type="GO" id="GO:0005737">
    <property type="term" value="C:cytoplasm"/>
    <property type="evidence" value="ECO:0007669"/>
    <property type="project" value="UniProtKB-SubCell"/>
</dbReference>
<dbReference type="GO" id="GO:0005524">
    <property type="term" value="F:ATP binding"/>
    <property type="evidence" value="ECO:0007669"/>
    <property type="project" value="UniProtKB-UniRule"/>
</dbReference>
<dbReference type="GO" id="GO:0046872">
    <property type="term" value="F:metal ion binding"/>
    <property type="evidence" value="ECO:0007669"/>
    <property type="project" value="UniProtKB-KW"/>
</dbReference>
<dbReference type="GO" id="GO:0004594">
    <property type="term" value="F:pantothenate kinase activity"/>
    <property type="evidence" value="ECO:0007669"/>
    <property type="project" value="UniProtKB-UniRule"/>
</dbReference>
<dbReference type="GO" id="GO:0015937">
    <property type="term" value="P:coenzyme A biosynthetic process"/>
    <property type="evidence" value="ECO:0007669"/>
    <property type="project" value="UniProtKB-UniRule"/>
</dbReference>
<dbReference type="CDD" id="cd24015">
    <property type="entry name" value="ASKHA_NBD_PanK-III"/>
    <property type="match status" value="1"/>
</dbReference>
<dbReference type="Gene3D" id="3.30.420.40">
    <property type="match status" value="2"/>
</dbReference>
<dbReference type="HAMAP" id="MF_01274">
    <property type="entry name" value="Pantothen_kinase_3"/>
    <property type="match status" value="1"/>
</dbReference>
<dbReference type="InterPro" id="IPR043129">
    <property type="entry name" value="ATPase_NBD"/>
</dbReference>
<dbReference type="InterPro" id="IPR004619">
    <property type="entry name" value="Type_III_PanK"/>
</dbReference>
<dbReference type="NCBIfam" id="TIGR00671">
    <property type="entry name" value="baf"/>
    <property type="match status" value="1"/>
</dbReference>
<dbReference type="NCBIfam" id="NF009847">
    <property type="entry name" value="PRK13318.1-5"/>
    <property type="match status" value="1"/>
</dbReference>
<dbReference type="NCBIfam" id="NF009848">
    <property type="entry name" value="PRK13318.1-6"/>
    <property type="match status" value="1"/>
</dbReference>
<dbReference type="NCBIfam" id="NF009855">
    <property type="entry name" value="PRK13321.1"/>
    <property type="match status" value="1"/>
</dbReference>
<dbReference type="PANTHER" id="PTHR34265">
    <property type="entry name" value="TYPE III PANTOTHENATE KINASE"/>
    <property type="match status" value="1"/>
</dbReference>
<dbReference type="PANTHER" id="PTHR34265:SF1">
    <property type="entry name" value="TYPE III PANTOTHENATE KINASE"/>
    <property type="match status" value="1"/>
</dbReference>
<dbReference type="Pfam" id="PF03309">
    <property type="entry name" value="Pan_kinase"/>
    <property type="match status" value="1"/>
</dbReference>
<dbReference type="SUPFAM" id="SSF53067">
    <property type="entry name" value="Actin-like ATPase domain"/>
    <property type="match status" value="2"/>
</dbReference>
<protein>
    <recommendedName>
        <fullName evidence="1">Type III pantothenate kinase</fullName>
        <ecNumber evidence="1">2.7.1.33</ecNumber>
    </recommendedName>
    <alternativeName>
        <fullName evidence="1">PanK-III</fullName>
    </alternativeName>
    <alternativeName>
        <fullName evidence="1">Pantothenic acid kinase</fullName>
    </alternativeName>
</protein>
<accession>B1IGY0</accession>
<sequence>MILVLDVGNTNIVLGIYKNKELIANWRLATDNKRTADEYGIQVIELFSHNNLSFSDIEGVIISSVVPNIMYSLEHMISKYFNIKPIIVGPGVKTGINIKYDNPKEVGADRIVNAVAAHEIYKKPLIIIDFGTATTFCAVTKEANYLGGTICPGIKISSDALFDKAAKLPRVELVKTPGVICKNTVASIQSGIIYGYAGQVDYIVSKMKKEMMDLGEEEPFVVATGGFAKLISEESKSIDEINAILTLEGLRVIYEKNK</sequence>
<proteinExistence type="inferred from homology"/>
<feature type="chain" id="PRO_1000140235" description="Type III pantothenate kinase">
    <location>
        <begin position="1"/>
        <end position="258"/>
    </location>
</feature>
<feature type="active site" description="Proton acceptor" evidence="1">
    <location>
        <position position="109"/>
    </location>
</feature>
<feature type="binding site" evidence="1">
    <location>
        <begin position="6"/>
        <end position="13"/>
    </location>
    <ligand>
        <name>ATP</name>
        <dbReference type="ChEBI" id="CHEBI:30616"/>
    </ligand>
</feature>
<feature type="binding site" evidence="1">
    <location>
        <position position="100"/>
    </location>
    <ligand>
        <name>substrate</name>
    </ligand>
</feature>
<feature type="binding site" evidence="1">
    <location>
        <begin position="107"/>
        <end position="110"/>
    </location>
    <ligand>
        <name>substrate</name>
    </ligand>
</feature>
<feature type="binding site" evidence="1">
    <location>
        <position position="129"/>
    </location>
    <ligand>
        <name>K(+)</name>
        <dbReference type="ChEBI" id="CHEBI:29103"/>
    </ligand>
</feature>
<feature type="binding site" evidence="1">
    <location>
        <position position="132"/>
    </location>
    <ligand>
        <name>ATP</name>
        <dbReference type="ChEBI" id="CHEBI:30616"/>
    </ligand>
</feature>
<feature type="binding site" evidence="1">
    <location>
        <position position="184"/>
    </location>
    <ligand>
        <name>substrate</name>
    </ligand>
</feature>
<keyword id="KW-0067">ATP-binding</keyword>
<keyword id="KW-0173">Coenzyme A biosynthesis</keyword>
<keyword id="KW-0963">Cytoplasm</keyword>
<keyword id="KW-0418">Kinase</keyword>
<keyword id="KW-0479">Metal-binding</keyword>
<keyword id="KW-0547">Nucleotide-binding</keyword>
<keyword id="KW-0630">Potassium</keyword>
<keyword id="KW-0808">Transferase</keyword>
<gene>
    <name evidence="1" type="primary">coaX</name>
    <name type="ordered locus">CLD_0968</name>
</gene>
<name>COAX_CLOBK</name>